<accession>B3QS09</accession>
<name>QUEC_CHLT3</name>
<sequence>MRAVVLLSGGMDSLVTTAIAAHLGYELAALHINYGQRTEKRELVAFQKICDFYRIERRLEINFEHLSLIGGSSLTDLAMPVTTAKLHSKEIPTSYVAFRNANMLSVAVSWAEVIGANKIFIGAVDEDSSGYPDCRVNFFQAFNELIKHGTKPDTRIEIQTPVISLKKWEIVIKGMELEVPFEHSWSCYKSEHVACGVCDSCALRLRAFEQAGIRDPIEYKIRPSYI</sequence>
<dbReference type="EC" id="6.3.4.20" evidence="1"/>
<dbReference type="EMBL" id="CP001100">
    <property type="protein sequence ID" value="ACF13954.1"/>
    <property type="molecule type" value="Genomic_DNA"/>
</dbReference>
<dbReference type="RefSeq" id="WP_012500038.1">
    <property type="nucleotide sequence ID" value="NC_011026.1"/>
</dbReference>
<dbReference type="SMR" id="B3QS09"/>
<dbReference type="STRING" id="517418.Ctha_1495"/>
<dbReference type="KEGG" id="cts:Ctha_1495"/>
<dbReference type="eggNOG" id="COG0603">
    <property type="taxonomic scope" value="Bacteria"/>
</dbReference>
<dbReference type="HOGENOM" id="CLU_081854_1_0_10"/>
<dbReference type="OrthoDB" id="9789567at2"/>
<dbReference type="UniPathway" id="UPA00391"/>
<dbReference type="Proteomes" id="UP000001208">
    <property type="component" value="Chromosome"/>
</dbReference>
<dbReference type="GO" id="GO:0005524">
    <property type="term" value="F:ATP binding"/>
    <property type="evidence" value="ECO:0007669"/>
    <property type="project" value="UniProtKB-UniRule"/>
</dbReference>
<dbReference type="GO" id="GO:0016879">
    <property type="term" value="F:ligase activity, forming carbon-nitrogen bonds"/>
    <property type="evidence" value="ECO:0007669"/>
    <property type="project" value="UniProtKB-UniRule"/>
</dbReference>
<dbReference type="GO" id="GO:0008270">
    <property type="term" value="F:zinc ion binding"/>
    <property type="evidence" value="ECO:0007669"/>
    <property type="project" value="UniProtKB-UniRule"/>
</dbReference>
<dbReference type="GO" id="GO:0008616">
    <property type="term" value="P:queuosine biosynthetic process"/>
    <property type="evidence" value="ECO:0007669"/>
    <property type="project" value="UniProtKB-UniRule"/>
</dbReference>
<dbReference type="CDD" id="cd01995">
    <property type="entry name" value="QueC-like"/>
    <property type="match status" value="1"/>
</dbReference>
<dbReference type="Gene3D" id="3.40.50.620">
    <property type="entry name" value="HUPs"/>
    <property type="match status" value="1"/>
</dbReference>
<dbReference type="HAMAP" id="MF_01633">
    <property type="entry name" value="QueC"/>
    <property type="match status" value="1"/>
</dbReference>
<dbReference type="InterPro" id="IPR018317">
    <property type="entry name" value="QueC"/>
</dbReference>
<dbReference type="InterPro" id="IPR014729">
    <property type="entry name" value="Rossmann-like_a/b/a_fold"/>
</dbReference>
<dbReference type="NCBIfam" id="TIGR00364">
    <property type="entry name" value="7-cyano-7-deazaguanine synthase QueC"/>
    <property type="match status" value="1"/>
</dbReference>
<dbReference type="PANTHER" id="PTHR42914">
    <property type="entry name" value="7-CYANO-7-DEAZAGUANINE SYNTHASE"/>
    <property type="match status" value="1"/>
</dbReference>
<dbReference type="PANTHER" id="PTHR42914:SF1">
    <property type="entry name" value="7-CYANO-7-DEAZAGUANINE SYNTHASE"/>
    <property type="match status" value="1"/>
</dbReference>
<dbReference type="Pfam" id="PF06508">
    <property type="entry name" value="QueC"/>
    <property type="match status" value="1"/>
</dbReference>
<dbReference type="PIRSF" id="PIRSF006293">
    <property type="entry name" value="ExsB"/>
    <property type="match status" value="1"/>
</dbReference>
<dbReference type="SUPFAM" id="SSF52402">
    <property type="entry name" value="Adenine nucleotide alpha hydrolases-like"/>
    <property type="match status" value="1"/>
</dbReference>
<keyword id="KW-0067">ATP-binding</keyword>
<keyword id="KW-0436">Ligase</keyword>
<keyword id="KW-0479">Metal-binding</keyword>
<keyword id="KW-0547">Nucleotide-binding</keyword>
<keyword id="KW-0671">Queuosine biosynthesis</keyword>
<keyword id="KW-1185">Reference proteome</keyword>
<keyword id="KW-0862">Zinc</keyword>
<comment type="function">
    <text evidence="1">Catalyzes the ATP-dependent conversion of 7-carboxy-7-deazaguanine (CDG) to 7-cyano-7-deazaguanine (preQ(0)).</text>
</comment>
<comment type="catalytic activity">
    <reaction evidence="1">
        <text>7-carboxy-7-deazaguanine + NH4(+) + ATP = 7-cyano-7-deazaguanine + ADP + phosphate + H2O + H(+)</text>
        <dbReference type="Rhea" id="RHEA:27982"/>
        <dbReference type="ChEBI" id="CHEBI:15377"/>
        <dbReference type="ChEBI" id="CHEBI:15378"/>
        <dbReference type="ChEBI" id="CHEBI:28938"/>
        <dbReference type="ChEBI" id="CHEBI:30616"/>
        <dbReference type="ChEBI" id="CHEBI:43474"/>
        <dbReference type="ChEBI" id="CHEBI:45075"/>
        <dbReference type="ChEBI" id="CHEBI:61036"/>
        <dbReference type="ChEBI" id="CHEBI:456216"/>
        <dbReference type="EC" id="6.3.4.20"/>
    </reaction>
</comment>
<comment type="cofactor">
    <cofactor evidence="1">
        <name>Zn(2+)</name>
        <dbReference type="ChEBI" id="CHEBI:29105"/>
    </cofactor>
    <text evidence="1">Binds 1 zinc ion per subunit.</text>
</comment>
<comment type="pathway">
    <text evidence="1">Purine metabolism; 7-cyano-7-deazaguanine biosynthesis.</text>
</comment>
<comment type="similarity">
    <text evidence="1">Belongs to the QueC family.</text>
</comment>
<evidence type="ECO:0000255" key="1">
    <source>
        <dbReference type="HAMAP-Rule" id="MF_01633"/>
    </source>
</evidence>
<protein>
    <recommendedName>
        <fullName evidence="1">7-cyano-7-deazaguanine synthase</fullName>
        <ecNumber evidence="1">6.3.4.20</ecNumber>
    </recommendedName>
    <alternativeName>
        <fullName evidence="1">7-cyano-7-carbaguanine synthase</fullName>
    </alternativeName>
    <alternativeName>
        <fullName evidence="1">PreQ(0) synthase</fullName>
    </alternativeName>
    <alternativeName>
        <fullName evidence="1">Queuosine biosynthesis protein QueC</fullName>
    </alternativeName>
</protein>
<organism>
    <name type="scientific">Chloroherpeton thalassium (strain ATCC 35110 / GB-78)</name>
    <dbReference type="NCBI Taxonomy" id="517418"/>
    <lineage>
        <taxon>Bacteria</taxon>
        <taxon>Pseudomonadati</taxon>
        <taxon>Chlorobiota</taxon>
        <taxon>Chlorobiia</taxon>
        <taxon>Chlorobiales</taxon>
        <taxon>Chloroherpetonaceae</taxon>
        <taxon>Chloroherpeton</taxon>
    </lineage>
</organism>
<gene>
    <name evidence="1" type="primary">queC</name>
    <name type="ordered locus">Ctha_1495</name>
</gene>
<proteinExistence type="inferred from homology"/>
<feature type="chain" id="PRO_1000186575" description="7-cyano-7-deazaguanine synthase">
    <location>
        <begin position="1"/>
        <end position="226"/>
    </location>
</feature>
<feature type="binding site" evidence="1">
    <location>
        <begin position="7"/>
        <end position="17"/>
    </location>
    <ligand>
        <name>ATP</name>
        <dbReference type="ChEBI" id="CHEBI:30616"/>
    </ligand>
</feature>
<feature type="binding site" evidence="1">
    <location>
        <position position="187"/>
    </location>
    <ligand>
        <name>Zn(2+)</name>
        <dbReference type="ChEBI" id="CHEBI:29105"/>
    </ligand>
</feature>
<feature type="binding site" evidence="1">
    <location>
        <position position="195"/>
    </location>
    <ligand>
        <name>Zn(2+)</name>
        <dbReference type="ChEBI" id="CHEBI:29105"/>
    </ligand>
</feature>
<feature type="binding site" evidence="1">
    <location>
        <position position="198"/>
    </location>
    <ligand>
        <name>Zn(2+)</name>
        <dbReference type="ChEBI" id="CHEBI:29105"/>
    </ligand>
</feature>
<feature type="binding site" evidence="1">
    <location>
        <position position="201"/>
    </location>
    <ligand>
        <name>Zn(2+)</name>
        <dbReference type="ChEBI" id="CHEBI:29105"/>
    </ligand>
</feature>
<reference key="1">
    <citation type="submission" date="2008-06" db="EMBL/GenBank/DDBJ databases">
        <title>Complete sequence of Chloroherpeton thalassium ATCC 35110.</title>
        <authorList>
            <consortium name="US DOE Joint Genome Institute"/>
            <person name="Lucas S."/>
            <person name="Copeland A."/>
            <person name="Lapidus A."/>
            <person name="Glavina del Rio T."/>
            <person name="Dalin E."/>
            <person name="Tice H."/>
            <person name="Bruce D."/>
            <person name="Goodwin L."/>
            <person name="Pitluck S."/>
            <person name="Schmutz J."/>
            <person name="Larimer F."/>
            <person name="Land M."/>
            <person name="Hauser L."/>
            <person name="Kyrpides N."/>
            <person name="Mikhailova N."/>
            <person name="Liu Z."/>
            <person name="Li T."/>
            <person name="Zhao F."/>
            <person name="Overmann J."/>
            <person name="Bryant D.A."/>
            <person name="Richardson P."/>
        </authorList>
    </citation>
    <scope>NUCLEOTIDE SEQUENCE [LARGE SCALE GENOMIC DNA]</scope>
    <source>
        <strain>ATCC 35110 / GB-78</strain>
    </source>
</reference>